<name>NUOK_RHOJR</name>
<protein>
    <recommendedName>
        <fullName evidence="1">NADH-quinone oxidoreductase subunit K</fullName>
        <ecNumber evidence="1">7.1.1.-</ecNumber>
    </recommendedName>
    <alternativeName>
        <fullName evidence="1">NADH dehydrogenase I subunit K</fullName>
    </alternativeName>
    <alternativeName>
        <fullName evidence="1">NDH-1 subunit K</fullName>
    </alternativeName>
</protein>
<comment type="function">
    <text evidence="1">NDH-1 shuttles electrons from NADH, via FMN and iron-sulfur (Fe-S) centers, to quinones in the respiratory chain. The immediate electron acceptor for the enzyme in this species is believed to be a menaquinone. Couples the redox reaction to proton translocation (for every two electrons transferred, four hydrogen ions are translocated across the cytoplasmic membrane), and thus conserves the redox energy in a proton gradient.</text>
</comment>
<comment type="catalytic activity">
    <reaction evidence="1">
        <text>a quinone + NADH + 5 H(+)(in) = a quinol + NAD(+) + 4 H(+)(out)</text>
        <dbReference type="Rhea" id="RHEA:57888"/>
        <dbReference type="ChEBI" id="CHEBI:15378"/>
        <dbReference type="ChEBI" id="CHEBI:24646"/>
        <dbReference type="ChEBI" id="CHEBI:57540"/>
        <dbReference type="ChEBI" id="CHEBI:57945"/>
        <dbReference type="ChEBI" id="CHEBI:132124"/>
    </reaction>
</comment>
<comment type="subunit">
    <text evidence="1">NDH-1 is composed of 14 different subunits. Subunits NuoA, H, J, K, L, M, N constitute the membrane sector of the complex.</text>
</comment>
<comment type="subcellular location">
    <subcellularLocation>
        <location evidence="1">Cell membrane</location>
        <topology evidence="1">Multi-pass membrane protein</topology>
    </subcellularLocation>
</comment>
<comment type="similarity">
    <text evidence="1">Belongs to the complex I subunit 4L family.</text>
</comment>
<feature type="chain" id="PRO_0000390205" description="NADH-quinone oxidoreductase subunit K">
    <location>
        <begin position="1"/>
        <end position="99"/>
    </location>
</feature>
<feature type="transmembrane region" description="Helical" evidence="1">
    <location>
        <begin position="3"/>
        <end position="23"/>
    </location>
</feature>
<feature type="transmembrane region" description="Helical" evidence="1">
    <location>
        <begin position="28"/>
        <end position="48"/>
    </location>
</feature>
<feature type="transmembrane region" description="Helical" evidence="1">
    <location>
        <begin position="59"/>
        <end position="79"/>
    </location>
</feature>
<sequence>MNPENYLYLSALLFTIGAAGVLIRRNAIIVFMCIELMLNASNLAFVTFARMHGNLDGQVFAFFTMVVAAAEVVVGLAIIMTIFRSRRSASVDDANLLKN</sequence>
<evidence type="ECO:0000255" key="1">
    <source>
        <dbReference type="HAMAP-Rule" id="MF_01456"/>
    </source>
</evidence>
<gene>
    <name evidence="1" type="primary">nuoK</name>
    <name type="ordered locus">RHA1_ro05919</name>
</gene>
<dbReference type="EC" id="7.1.1.-" evidence="1"/>
<dbReference type="EMBL" id="CP000431">
    <property type="protein sequence ID" value="ABG97696.1"/>
    <property type="molecule type" value="Genomic_DNA"/>
</dbReference>
<dbReference type="RefSeq" id="WP_005239116.1">
    <property type="nucleotide sequence ID" value="NC_008268.1"/>
</dbReference>
<dbReference type="SMR" id="Q0S440"/>
<dbReference type="GeneID" id="69890299"/>
<dbReference type="KEGG" id="rha:RHA1_ro05919"/>
<dbReference type="eggNOG" id="COG0713">
    <property type="taxonomic scope" value="Bacteria"/>
</dbReference>
<dbReference type="HOGENOM" id="CLU_144724_0_0_11"/>
<dbReference type="OrthoDB" id="9810120at2"/>
<dbReference type="Proteomes" id="UP000008710">
    <property type="component" value="Chromosome"/>
</dbReference>
<dbReference type="GO" id="GO:0030964">
    <property type="term" value="C:NADH dehydrogenase complex"/>
    <property type="evidence" value="ECO:0007669"/>
    <property type="project" value="TreeGrafter"/>
</dbReference>
<dbReference type="GO" id="GO:0005886">
    <property type="term" value="C:plasma membrane"/>
    <property type="evidence" value="ECO:0007669"/>
    <property type="project" value="UniProtKB-SubCell"/>
</dbReference>
<dbReference type="GO" id="GO:0050136">
    <property type="term" value="F:NADH:ubiquinone reductase (non-electrogenic) activity"/>
    <property type="evidence" value="ECO:0007669"/>
    <property type="project" value="UniProtKB-UniRule"/>
</dbReference>
<dbReference type="GO" id="GO:0048038">
    <property type="term" value="F:quinone binding"/>
    <property type="evidence" value="ECO:0007669"/>
    <property type="project" value="UniProtKB-KW"/>
</dbReference>
<dbReference type="GO" id="GO:0042773">
    <property type="term" value="P:ATP synthesis coupled electron transport"/>
    <property type="evidence" value="ECO:0007669"/>
    <property type="project" value="InterPro"/>
</dbReference>
<dbReference type="FunFam" id="1.10.287.3510:FF:000001">
    <property type="entry name" value="NADH-quinone oxidoreductase subunit K"/>
    <property type="match status" value="1"/>
</dbReference>
<dbReference type="Gene3D" id="1.10.287.3510">
    <property type="match status" value="1"/>
</dbReference>
<dbReference type="HAMAP" id="MF_01456">
    <property type="entry name" value="NDH1_NuoK"/>
    <property type="match status" value="1"/>
</dbReference>
<dbReference type="InterPro" id="IPR001133">
    <property type="entry name" value="NADH_UbQ_OxRdtase_chain4L/K"/>
</dbReference>
<dbReference type="InterPro" id="IPR039428">
    <property type="entry name" value="NUOK/Mnh_C1-like"/>
</dbReference>
<dbReference type="NCBIfam" id="NF004320">
    <property type="entry name" value="PRK05715.1-2"/>
    <property type="match status" value="1"/>
</dbReference>
<dbReference type="NCBIfam" id="NF004321">
    <property type="entry name" value="PRK05715.1-3"/>
    <property type="match status" value="1"/>
</dbReference>
<dbReference type="NCBIfam" id="NF004323">
    <property type="entry name" value="PRK05715.1-5"/>
    <property type="match status" value="1"/>
</dbReference>
<dbReference type="PANTHER" id="PTHR11434:SF21">
    <property type="entry name" value="NADH DEHYDROGENASE SUBUNIT 4L-RELATED"/>
    <property type="match status" value="1"/>
</dbReference>
<dbReference type="PANTHER" id="PTHR11434">
    <property type="entry name" value="NADH-UBIQUINONE OXIDOREDUCTASE SUBUNIT ND4L"/>
    <property type="match status" value="1"/>
</dbReference>
<dbReference type="Pfam" id="PF00420">
    <property type="entry name" value="Oxidored_q2"/>
    <property type="match status" value="1"/>
</dbReference>
<accession>Q0S440</accession>
<proteinExistence type="inferred from homology"/>
<reference key="1">
    <citation type="journal article" date="2006" name="Proc. Natl. Acad. Sci. U.S.A.">
        <title>The complete genome of Rhodococcus sp. RHA1 provides insights into a catabolic powerhouse.</title>
        <authorList>
            <person name="McLeod M.P."/>
            <person name="Warren R.L."/>
            <person name="Hsiao W.W.L."/>
            <person name="Araki N."/>
            <person name="Myhre M."/>
            <person name="Fernandes C."/>
            <person name="Miyazawa D."/>
            <person name="Wong W."/>
            <person name="Lillquist A.L."/>
            <person name="Wang D."/>
            <person name="Dosanjh M."/>
            <person name="Hara H."/>
            <person name="Petrescu A."/>
            <person name="Morin R.D."/>
            <person name="Yang G."/>
            <person name="Stott J.M."/>
            <person name="Schein J.E."/>
            <person name="Shin H."/>
            <person name="Smailus D."/>
            <person name="Siddiqui A.S."/>
            <person name="Marra M.A."/>
            <person name="Jones S.J.M."/>
            <person name="Holt R."/>
            <person name="Brinkman F.S.L."/>
            <person name="Miyauchi K."/>
            <person name="Fukuda M."/>
            <person name="Davies J.E."/>
            <person name="Mohn W.W."/>
            <person name="Eltis L.D."/>
        </authorList>
    </citation>
    <scope>NUCLEOTIDE SEQUENCE [LARGE SCALE GENOMIC DNA]</scope>
    <source>
        <strain>RHA1</strain>
    </source>
</reference>
<organism>
    <name type="scientific">Rhodococcus jostii (strain RHA1)</name>
    <dbReference type="NCBI Taxonomy" id="101510"/>
    <lineage>
        <taxon>Bacteria</taxon>
        <taxon>Bacillati</taxon>
        <taxon>Actinomycetota</taxon>
        <taxon>Actinomycetes</taxon>
        <taxon>Mycobacteriales</taxon>
        <taxon>Nocardiaceae</taxon>
        <taxon>Rhodococcus</taxon>
    </lineage>
</organism>
<keyword id="KW-1003">Cell membrane</keyword>
<keyword id="KW-0472">Membrane</keyword>
<keyword id="KW-0520">NAD</keyword>
<keyword id="KW-0874">Quinone</keyword>
<keyword id="KW-1278">Translocase</keyword>
<keyword id="KW-0812">Transmembrane</keyword>
<keyword id="KW-1133">Transmembrane helix</keyword>
<keyword id="KW-0813">Transport</keyword>